<name>PSD_CLOB6</name>
<gene>
    <name evidence="1" type="primary">psd</name>
    <name type="ordered locus">CLJ_B0027</name>
</gene>
<sequence>MIKYYNRRNKDYDIEKVAGEKYLNWTYSSPIGMNLLEVFIKKKFFSKIYGFYCNKRLSRKKINKFINDFGIDMSLSENQSSNFKCFNDFFTRKLKKEARPVKADKNLLISPGDGKILAYKNLNLNSVTEVKGINYSFYELINNDSLAKEYDNGTCLVLRLCPTDYHRFHFIDNGICENTIKLKGFYYSVNPIALSKIPSVFCKNKREYSIFHSENFGDIIFMEVGATCVGSIIQTYKPNTKILKGDEKGYFKFGGSTVILFFKKNTIKIDNDILSQSKLGYETSVIMGEPIGSRK</sequence>
<dbReference type="EC" id="4.1.1.65" evidence="1"/>
<dbReference type="EMBL" id="CP001083">
    <property type="protein sequence ID" value="ACQ55020.1"/>
    <property type="molecule type" value="Genomic_DNA"/>
</dbReference>
<dbReference type="RefSeq" id="WP_003362932.1">
    <property type="nucleotide sequence ID" value="NC_012658.1"/>
</dbReference>
<dbReference type="SMR" id="C3KXS2"/>
<dbReference type="KEGG" id="cbi:CLJ_B0027"/>
<dbReference type="HOGENOM" id="CLU_029061_2_2_9"/>
<dbReference type="UniPathway" id="UPA00558">
    <property type="reaction ID" value="UER00616"/>
</dbReference>
<dbReference type="Proteomes" id="UP000002333">
    <property type="component" value="Chromosome"/>
</dbReference>
<dbReference type="GO" id="GO:0005886">
    <property type="term" value="C:plasma membrane"/>
    <property type="evidence" value="ECO:0007669"/>
    <property type="project" value="UniProtKB-SubCell"/>
</dbReference>
<dbReference type="GO" id="GO:0004609">
    <property type="term" value="F:phosphatidylserine decarboxylase activity"/>
    <property type="evidence" value="ECO:0007669"/>
    <property type="project" value="UniProtKB-UniRule"/>
</dbReference>
<dbReference type="GO" id="GO:0006646">
    <property type="term" value="P:phosphatidylethanolamine biosynthetic process"/>
    <property type="evidence" value="ECO:0007669"/>
    <property type="project" value="UniProtKB-UniRule"/>
</dbReference>
<dbReference type="HAMAP" id="MF_00663">
    <property type="entry name" value="PS_decarb_PSD_B_type2"/>
    <property type="match status" value="1"/>
</dbReference>
<dbReference type="InterPro" id="IPR003817">
    <property type="entry name" value="PS_Dcarbxylase"/>
</dbReference>
<dbReference type="InterPro" id="IPR033177">
    <property type="entry name" value="PSD-B"/>
</dbReference>
<dbReference type="InterPro" id="IPR033179">
    <property type="entry name" value="PSD_type2_pro"/>
</dbReference>
<dbReference type="NCBIfam" id="NF001941">
    <property type="entry name" value="PRK00723.1"/>
    <property type="match status" value="1"/>
</dbReference>
<dbReference type="NCBIfam" id="TIGR00163">
    <property type="entry name" value="PS_decarb"/>
    <property type="match status" value="1"/>
</dbReference>
<dbReference type="PANTHER" id="PTHR10067">
    <property type="entry name" value="PHOSPHATIDYLSERINE DECARBOXYLASE"/>
    <property type="match status" value="1"/>
</dbReference>
<dbReference type="PANTHER" id="PTHR10067:SF17">
    <property type="entry name" value="PHOSPHATIDYLSERINE DECARBOXYLASE PROENZYME 2"/>
    <property type="match status" value="1"/>
</dbReference>
<dbReference type="Pfam" id="PF02666">
    <property type="entry name" value="PS_Dcarbxylase"/>
    <property type="match status" value="1"/>
</dbReference>
<protein>
    <recommendedName>
        <fullName evidence="1">Phosphatidylserine decarboxylase proenzyme</fullName>
        <ecNumber evidence="1">4.1.1.65</ecNumber>
    </recommendedName>
    <component>
        <recommendedName>
            <fullName evidence="1">Phosphatidylserine decarboxylase alpha chain</fullName>
        </recommendedName>
    </component>
    <component>
        <recommendedName>
            <fullName evidence="1">Phosphatidylserine decarboxylase beta chain</fullName>
        </recommendedName>
    </component>
</protein>
<accession>C3KXS2</accession>
<keyword id="KW-1003">Cell membrane</keyword>
<keyword id="KW-0210">Decarboxylase</keyword>
<keyword id="KW-0444">Lipid biosynthesis</keyword>
<keyword id="KW-0443">Lipid metabolism</keyword>
<keyword id="KW-0456">Lyase</keyword>
<keyword id="KW-0472">Membrane</keyword>
<keyword id="KW-0594">Phospholipid biosynthesis</keyword>
<keyword id="KW-1208">Phospholipid metabolism</keyword>
<keyword id="KW-0670">Pyruvate</keyword>
<keyword id="KW-0865">Zymogen</keyword>
<proteinExistence type="inferred from homology"/>
<evidence type="ECO:0000255" key="1">
    <source>
        <dbReference type="HAMAP-Rule" id="MF_00663"/>
    </source>
</evidence>
<feature type="chain" id="PRO_1000212491" description="Phosphatidylserine decarboxylase beta chain" evidence="1">
    <location>
        <begin position="1"/>
        <end position="255"/>
    </location>
</feature>
<feature type="chain" id="PRO_1000212492" description="Phosphatidylserine decarboxylase alpha chain" evidence="1">
    <location>
        <begin position="256"/>
        <end position="295"/>
    </location>
</feature>
<feature type="active site" description="Charge relay system; for autoendoproteolytic cleavage activity" evidence="1">
    <location>
        <position position="113"/>
    </location>
</feature>
<feature type="active site" description="Charge relay system; for autoendoproteolytic cleavage activity" evidence="1">
    <location>
        <position position="169"/>
    </location>
</feature>
<feature type="active site" description="Charge relay system; for autoendoproteolytic cleavage activity" evidence="1">
    <location>
        <position position="256"/>
    </location>
</feature>
<feature type="active site" description="Schiff-base intermediate with substrate; via pyruvic acid; for decarboxylase activity" evidence="1">
    <location>
        <position position="256"/>
    </location>
</feature>
<feature type="site" description="Cleavage (non-hydrolytic); by autocatalysis" evidence="1">
    <location>
        <begin position="255"/>
        <end position="256"/>
    </location>
</feature>
<feature type="modified residue" description="Pyruvic acid (Ser); by autocatalysis" evidence="1">
    <location>
        <position position="256"/>
    </location>
</feature>
<organism>
    <name type="scientific">Clostridium botulinum (strain 657 / Type Ba4)</name>
    <dbReference type="NCBI Taxonomy" id="515621"/>
    <lineage>
        <taxon>Bacteria</taxon>
        <taxon>Bacillati</taxon>
        <taxon>Bacillota</taxon>
        <taxon>Clostridia</taxon>
        <taxon>Eubacteriales</taxon>
        <taxon>Clostridiaceae</taxon>
        <taxon>Clostridium</taxon>
    </lineage>
</organism>
<comment type="function">
    <text evidence="1">Catalyzes the formation of phosphatidylethanolamine (PtdEtn) from phosphatidylserine (PtdSer).</text>
</comment>
<comment type="catalytic activity">
    <reaction evidence="1">
        <text>a 1,2-diacyl-sn-glycero-3-phospho-L-serine + H(+) = a 1,2-diacyl-sn-glycero-3-phosphoethanolamine + CO2</text>
        <dbReference type="Rhea" id="RHEA:20828"/>
        <dbReference type="ChEBI" id="CHEBI:15378"/>
        <dbReference type="ChEBI" id="CHEBI:16526"/>
        <dbReference type="ChEBI" id="CHEBI:57262"/>
        <dbReference type="ChEBI" id="CHEBI:64612"/>
        <dbReference type="EC" id="4.1.1.65"/>
    </reaction>
</comment>
<comment type="cofactor">
    <cofactor evidence="1">
        <name>pyruvate</name>
        <dbReference type="ChEBI" id="CHEBI:15361"/>
    </cofactor>
    <text evidence="1">Binds 1 pyruvoyl group covalently per subunit.</text>
</comment>
<comment type="pathway">
    <text evidence="1">Phospholipid metabolism; phosphatidylethanolamine biosynthesis; phosphatidylethanolamine from CDP-diacylglycerol: step 2/2.</text>
</comment>
<comment type="subunit">
    <text evidence="1">Heterodimer of a large membrane-associated beta subunit and a small pyruvoyl-containing alpha subunit.</text>
</comment>
<comment type="subcellular location">
    <subcellularLocation>
        <location evidence="1">Cell membrane</location>
        <topology evidence="1">Peripheral membrane protein</topology>
    </subcellularLocation>
</comment>
<comment type="PTM">
    <text evidence="1">Is synthesized initially as an inactive proenzyme. Formation of the active enzyme involves a self-maturation process in which the active site pyruvoyl group is generated from an internal serine residue via an autocatalytic post-translational modification. Two non-identical subunits are generated from the proenzyme in this reaction, and the pyruvate is formed at the N-terminus of the alpha chain, which is derived from the carboxyl end of the proenzyme. The autoendoproteolytic cleavage occurs by a canonical serine protease mechanism, in which the side chain hydroxyl group of the serine supplies its oxygen atom to form the C-terminus of the beta chain, while the remainder of the serine residue undergoes an oxidative deamination to produce ammonia and the pyruvoyl prosthetic group on the alpha chain. During this reaction, the Ser that is part of the protease active site of the proenzyme becomes the pyruvoyl prosthetic group, which constitutes an essential element of the active site of the mature decarboxylase.</text>
</comment>
<comment type="similarity">
    <text evidence="1">Belongs to the phosphatidylserine decarboxylase family. PSD-B subfamily. Prokaryotic type II sub-subfamily.</text>
</comment>
<reference key="1">
    <citation type="submission" date="2008-05" db="EMBL/GenBank/DDBJ databases">
        <title>Genome sequence of Clostridium botulinum Ba4 strain 657.</title>
        <authorList>
            <person name="Shrivastava S."/>
            <person name="Brown J.L."/>
            <person name="Bruce D."/>
            <person name="Detter C."/>
            <person name="Munk C."/>
            <person name="Smith L.A."/>
            <person name="Smith T.J."/>
            <person name="Sutton G."/>
            <person name="Brettin T.S."/>
        </authorList>
    </citation>
    <scope>NUCLEOTIDE SEQUENCE [LARGE SCALE GENOMIC DNA]</scope>
    <source>
        <strain>657 / Type Ba4</strain>
    </source>
</reference>